<organism>
    <name type="scientific">African swine fever virus (isolate Tick/South Africa/Pretoriuskop Pr4/1996)</name>
    <name type="common">ASFV</name>
    <dbReference type="NCBI Taxonomy" id="561443"/>
    <lineage>
        <taxon>Viruses</taxon>
        <taxon>Varidnaviria</taxon>
        <taxon>Bamfordvirae</taxon>
        <taxon>Nucleocytoviricota</taxon>
        <taxon>Pokkesviricetes</taxon>
        <taxon>Asfuvirales</taxon>
        <taxon>Asfarviridae</taxon>
        <taxon>Asfivirus</taxon>
        <taxon>African swine fever virus</taxon>
    </lineage>
</organism>
<evidence type="ECO:0000250" key="1">
    <source>
        <dbReference type="UniProtKB" id="P27944"/>
    </source>
</evidence>
<evidence type="ECO:0000250" key="2">
    <source>
        <dbReference type="UniProtKB" id="Q65250"/>
    </source>
</evidence>
<evidence type="ECO:0000255" key="3"/>
<evidence type="ECO:0000305" key="4"/>
<gene>
    <name type="ordered locus">Pret-150</name>
</gene>
<proteinExistence type="inferred from homology"/>
<accession>P0CAA2</accession>
<keyword id="KW-0325">Glycoprotein</keyword>
<keyword id="KW-0945">Host-virus interaction</keyword>
<keyword id="KW-1100">Inhibition of host NF-kappa-B by virus</keyword>
<keyword id="KW-0732">Signal</keyword>
<protein>
    <recommendedName>
        <fullName>Late protein I226R</fullName>
        <shortName>pI226R</shortName>
    </recommendedName>
</protein>
<dbReference type="EMBL" id="AY261363">
    <property type="status" value="NOT_ANNOTATED_CDS"/>
    <property type="molecule type" value="Genomic_DNA"/>
</dbReference>
<dbReference type="Proteomes" id="UP000000859">
    <property type="component" value="Segment"/>
</dbReference>
<dbReference type="GO" id="GO:0085034">
    <property type="term" value="P:symbiont-mediated suppression of host NF-kappaB cascade"/>
    <property type="evidence" value="ECO:0007669"/>
    <property type="project" value="UniProtKB-KW"/>
</dbReference>
<reference key="1">
    <citation type="submission" date="2003-03" db="EMBL/GenBank/DDBJ databases">
        <title>African swine fever virus genomes.</title>
        <authorList>
            <person name="Kutish G.F."/>
            <person name="Rock D.L."/>
        </authorList>
    </citation>
    <scope>NUCLEOTIDE SEQUENCE [GENOMIC DNA]</scope>
</reference>
<sequence>MKMETFLVCLFHNADGLHQQIQEILYLLRMHIYETNLYLKQELSRLIYPNRQLSFVLLMPLSLLRNWDDIEYLTDVVDDKQTLHYAANLLTNYVLHLSMFQKLTKPYFLLAVKRVSEKLNKKQRHSFYEVLVTSETLNNYENLSKNILNTLMFAVRYVFKPTPNYSEILAELEKKNKIHHIIFNMVITDFAQIREQQMDKHLCETNNELRQECKETIFDLKVVGNV</sequence>
<comment type="function">
    <text evidence="1">Plays a role in the inhibition of host NF-kappa-B and IRF3 signaling pathways. Mechanistically, promotes the degradation of host IKBKG through enhancing its ubiquitination leading to inhibition of both pathways.</text>
</comment>
<comment type="induction">
    <text evidence="2">Expressed in the intermediate phase of the viral replicative cycle (immediately after DNA replication).</text>
</comment>
<comment type="similarity">
    <text evidence="4">Belongs to the asfivirus I226R family.</text>
</comment>
<organismHost>
    <name type="scientific">Ornithodoros</name>
    <name type="common">relapsing fever ticks</name>
    <dbReference type="NCBI Taxonomy" id="6937"/>
</organismHost>
<organismHost>
    <name type="scientific">Phacochoerus aethiopicus</name>
    <name type="common">Warthog</name>
    <dbReference type="NCBI Taxonomy" id="85517"/>
</organismHost>
<organismHost>
    <name type="scientific">Phacochoerus africanus</name>
    <name type="common">Warthog</name>
    <dbReference type="NCBI Taxonomy" id="41426"/>
</organismHost>
<organismHost>
    <name type="scientific">Potamochoerus larvatus</name>
    <name type="common">Bushpig</name>
    <dbReference type="NCBI Taxonomy" id="273792"/>
</organismHost>
<organismHost>
    <name type="scientific">Sus scrofa</name>
    <name type="common">Pig</name>
    <dbReference type="NCBI Taxonomy" id="9823"/>
</organismHost>
<feature type="signal peptide" evidence="3">
    <location>
        <begin position="1"/>
        <end position="16"/>
    </location>
</feature>
<feature type="chain" id="PRO_0000373593" description="Late protein I226R">
    <location>
        <begin position="17"/>
        <end position="226"/>
    </location>
</feature>
<feature type="glycosylation site" description="N-linked (GlcNAc...) asparagine; by host" evidence="3">
    <location>
        <position position="142"/>
    </location>
</feature>
<feature type="glycosylation site" description="N-linked (GlcNAc...) asparagine; by host" evidence="3">
    <location>
        <position position="164"/>
    </location>
</feature>
<name>VF226_ASFP4</name>